<dbReference type="EMBL" id="AF284420">
    <property type="protein sequence ID" value="AAF91476.1"/>
    <property type="molecule type" value="mRNA"/>
</dbReference>
<dbReference type="EMBL" id="AAGW02000935">
    <property type="status" value="NOT_ANNOTATED_CDS"/>
    <property type="molecule type" value="Genomic_DNA"/>
</dbReference>
<dbReference type="EMBL" id="M81351">
    <property type="protein sequence ID" value="AAD43820.1"/>
    <property type="molecule type" value="mRNA"/>
</dbReference>
<dbReference type="RefSeq" id="NP_001076191.1">
    <property type="nucleotide sequence ID" value="NM_001082722.1"/>
</dbReference>
<dbReference type="RefSeq" id="XP_008262207.1">
    <property type="nucleotide sequence ID" value="XM_008263985.2"/>
</dbReference>
<dbReference type="RefSeq" id="XP_008262208.1">
    <property type="nucleotide sequence ID" value="XM_008263986.2"/>
</dbReference>
<dbReference type="RefSeq" id="XP_008262210.1">
    <property type="nucleotide sequence ID" value="XM_008263988.2"/>
</dbReference>
<dbReference type="SMR" id="Q09081"/>
<dbReference type="FunCoup" id="Q09081">
    <property type="interactions" value="115"/>
</dbReference>
<dbReference type="STRING" id="9986.ENSOCUP00000007687"/>
<dbReference type="GlyCosmos" id="Q09081">
    <property type="glycosylation" value="1 site, No reported glycans"/>
</dbReference>
<dbReference type="iPTMnet" id="Q09081"/>
<dbReference type="PaxDb" id="9986-ENSOCUP00000007687"/>
<dbReference type="Ensembl" id="ENSOCUT00000008904.2">
    <property type="protein sequence ID" value="ENSOCUP00000007687.2"/>
    <property type="gene ID" value="ENSOCUG00000008908.2"/>
</dbReference>
<dbReference type="GeneID" id="100009479"/>
<dbReference type="KEGG" id="ocu:100009479"/>
<dbReference type="CTD" id="3737"/>
<dbReference type="eggNOG" id="KOG1545">
    <property type="taxonomic scope" value="Eukaryota"/>
</dbReference>
<dbReference type="GeneTree" id="ENSGT00940000158688"/>
<dbReference type="HOGENOM" id="CLU_011722_4_0_1"/>
<dbReference type="InParanoid" id="Q09081"/>
<dbReference type="OMA" id="RNDEDDM"/>
<dbReference type="OrthoDB" id="415460at2759"/>
<dbReference type="TreeFam" id="TF313103"/>
<dbReference type="Proteomes" id="UP000001811">
    <property type="component" value="Chromosome 13"/>
</dbReference>
<dbReference type="Bgee" id="ENSOCUG00000008908">
    <property type="expression patterns" value="Expressed in frontal cortex and 6 other cell types or tissues"/>
</dbReference>
<dbReference type="GO" id="GO:0030424">
    <property type="term" value="C:axon"/>
    <property type="evidence" value="ECO:0000250"/>
    <property type="project" value="UniProtKB"/>
</dbReference>
<dbReference type="GO" id="GO:0043194">
    <property type="term" value="C:axon initial segment"/>
    <property type="evidence" value="ECO:0007669"/>
    <property type="project" value="Ensembl"/>
</dbReference>
<dbReference type="GO" id="GO:0043679">
    <property type="term" value="C:axon terminus"/>
    <property type="evidence" value="ECO:0000250"/>
    <property type="project" value="UniProtKB"/>
</dbReference>
<dbReference type="GO" id="GO:0030425">
    <property type="term" value="C:dendrite"/>
    <property type="evidence" value="ECO:0000250"/>
    <property type="project" value="UniProtKB"/>
</dbReference>
<dbReference type="GO" id="GO:0005789">
    <property type="term" value="C:endoplasmic reticulum membrane"/>
    <property type="evidence" value="ECO:0007669"/>
    <property type="project" value="UniProtKB-SubCell"/>
</dbReference>
<dbReference type="GO" id="GO:0044224">
    <property type="term" value="C:juxtaparanode region of axon"/>
    <property type="evidence" value="ECO:0000250"/>
    <property type="project" value="UniProtKB"/>
</dbReference>
<dbReference type="GO" id="GO:0030027">
    <property type="term" value="C:lamellipodium"/>
    <property type="evidence" value="ECO:0000250"/>
    <property type="project" value="UniProtKB"/>
</dbReference>
<dbReference type="GO" id="GO:0031258">
    <property type="term" value="C:lamellipodium membrane"/>
    <property type="evidence" value="ECO:0007669"/>
    <property type="project" value="UniProtKB-SubCell"/>
</dbReference>
<dbReference type="GO" id="GO:0032809">
    <property type="term" value="C:neuronal cell body membrane"/>
    <property type="evidence" value="ECO:0000250"/>
    <property type="project" value="UniProtKB"/>
</dbReference>
<dbReference type="GO" id="GO:0033010">
    <property type="term" value="C:paranodal junction"/>
    <property type="evidence" value="ECO:0007669"/>
    <property type="project" value="UniProtKB-SubCell"/>
</dbReference>
<dbReference type="GO" id="GO:0043204">
    <property type="term" value="C:perikaryon"/>
    <property type="evidence" value="ECO:0000250"/>
    <property type="project" value="UniProtKB"/>
</dbReference>
<dbReference type="GO" id="GO:0005886">
    <property type="term" value="C:plasma membrane"/>
    <property type="evidence" value="ECO:0000250"/>
    <property type="project" value="UniProtKB"/>
</dbReference>
<dbReference type="GO" id="GO:0042734">
    <property type="term" value="C:presynaptic membrane"/>
    <property type="evidence" value="ECO:0007669"/>
    <property type="project" value="UniProtKB-SubCell"/>
</dbReference>
<dbReference type="GO" id="GO:0008076">
    <property type="term" value="C:voltage-gated potassium channel complex"/>
    <property type="evidence" value="ECO:0000250"/>
    <property type="project" value="UniProtKB"/>
</dbReference>
<dbReference type="GO" id="GO:0005251">
    <property type="term" value="F:delayed rectifier potassium channel activity"/>
    <property type="evidence" value="ECO:0000250"/>
    <property type="project" value="UniProtKB"/>
</dbReference>
<dbReference type="GO" id="GO:0005249">
    <property type="term" value="F:voltage-gated potassium channel activity"/>
    <property type="evidence" value="ECO:0000314"/>
    <property type="project" value="UniProtKB"/>
</dbReference>
<dbReference type="GO" id="GO:0019228">
    <property type="term" value="P:neuronal action potential"/>
    <property type="evidence" value="ECO:0000250"/>
    <property type="project" value="UniProtKB"/>
</dbReference>
<dbReference type="GO" id="GO:0021633">
    <property type="term" value="P:optic nerve structural organization"/>
    <property type="evidence" value="ECO:0007669"/>
    <property type="project" value="Ensembl"/>
</dbReference>
<dbReference type="GO" id="GO:0071805">
    <property type="term" value="P:potassium ion transmembrane transport"/>
    <property type="evidence" value="ECO:0000250"/>
    <property type="project" value="UniProtKB"/>
</dbReference>
<dbReference type="GO" id="GO:0051260">
    <property type="term" value="P:protein homooligomerization"/>
    <property type="evidence" value="ECO:0007669"/>
    <property type="project" value="InterPro"/>
</dbReference>
<dbReference type="GO" id="GO:0045188">
    <property type="term" value="P:regulation of circadian sleep/wake cycle, non-REM sleep"/>
    <property type="evidence" value="ECO:0007669"/>
    <property type="project" value="Ensembl"/>
</dbReference>
<dbReference type="GO" id="GO:0014059">
    <property type="term" value="P:regulation of dopamine secretion"/>
    <property type="evidence" value="ECO:0000250"/>
    <property type="project" value="UniProtKB"/>
</dbReference>
<dbReference type="GO" id="GO:0019233">
    <property type="term" value="P:sensory perception of pain"/>
    <property type="evidence" value="ECO:0000250"/>
    <property type="project" value="UniProtKB"/>
</dbReference>
<dbReference type="FunFam" id="1.10.287.70:FF:000002">
    <property type="entry name" value="Potassium voltage-gated channel subfamily a member"/>
    <property type="match status" value="1"/>
</dbReference>
<dbReference type="FunFam" id="1.20.120.350:FF:000025">
    <property type="entry name" value="Potassium voltage-gated channel subfamily A member 2"/>
    <property type="match status" value="1"/>
</dbReference>
<dbReference type="FunFam" id="3.30.710.10:FF:000007">
    <property type="entry name" value="Potassium voltage-gated channel subfamily A member 2"/>
    <property type="match status" value="1"/>
</dbReference>
<dbReference type="Gene3D" id="1.10.287.70">
    <property type="match status" value="1"/>
</dbReference>
<dbReference type="Gene3D" id="3.30.710.10">
    <property type="entry name" value="Potassium Channel Kv1.1, Chain A"/>
    <property type="match status" value="1"/>
</dbReference>
<dbReference type="Gene3D" id="1.20.120.350">
    <property type="entry name" value="Voltage-gated potassium channels. Chain C"/>
    <property type="match status" value="1"/>
</dbReference>
<dbReference type="InterPro" id="IPR000210">
    <property type="entry name" value="BTB/POZ_dom"/>
</dbReference>
<dbReference type="InterPro" id="IPR005821">
    <property type="entry name" value="Ion_trans_dom"/>
</dbReference>
<dbReference type="InterPro" id="IPR003968">
    <property type="entry name" value="K_chnl_volt-dep_Kv"/>
</dbReference>
<dbReference type="InterPro" id="IPR003972">
    <property type="entry name" value="K_chnl_volt-dep_Kv1"/>
</dbReference>
<dbReference type="InterPro" id="IPR004049">
    <property type="entry name" value="K_chnl_volt-dep_Kv1.2"/>
</dbReference>
<dbReference type="InterPro" id="IPR011333">
    <property type="entry name" value="SKP1/BTB/POZ_sf"/>
</dbReference>
<dbReference type="InterPro" id="IPR003131">
    <property type="entry name" value="T1-type_BTB"/>
</dbReference>
<dbReference type="InterPro" id="IPR028325">
    <property type="entry name" value="VG_K_chnl"/>
</dbReference>
<dbReference type="InterPro" id="IPR027359">
    <property type="entry name" value="Volt_channel_dom_sf"/>
</dbReference>
<dbReference type="PANTHER" id="PTHR11537:SF23">
    <property type="entry name" value="POTASSIUM VOLTAGE-GATED CHANNEL SUBFAMILY A MEMBER 2"/>
    <property type="match status" value="1"/>
</dbReference>
<dbReference type="PANTHER" id="PTHR11537">
    <property type="entry name" value="VOLTAGE-GATED POTASSIUM CHANNEL"/>
    <property type="match status" value="1"/>
</dbReference>
<dbReference type="Pfam" id="PF02214">
    <property type="entry name" value="BTB_2"/>
    <property type="match status" value="1"/>
</dbReference>
<dbReference type="Pfam" id="PF00520">
    <property type="entry name" value="Ion_trans"/>
    <property type="match status" value="1"/>
</dbReference>
<dbReference type="PRINTS" id="PR00169">
    <property type="entry name" value="KCHANNEL"/>
</dbReference>
<dbReference type="PRINTS" id="PR01509">
    <property type="entry name" value="KV12CHANNEL"/>
</dbReference>
<dbReference type="PRINTS" id="PR01491">
    <property type="entry name" value="KVCHANNEL"/>
</dbReference>
<dbReference type="PRINTS" id="PR01496">
    <property type="entry name" value="SHAKERCHANEL"/>
</dbReference>
<dbReference type="SMART" id="SM00225">
    <property type="entry name" value="BTB"/>
    <property type="match status" value="1"/>
</dbReference>
<dbReference type="SUPFAM" id="SSF54695">
    <property type="entry name" value="POZ domain"/>
    <property type="match status" value="1"/>
</dbReference>
<dbReference type="SUPFAM" id="SSF81324">
    <property type="entry name" value="Voltage-gated potassium channels"/>
    <property type="match status" value="1"/>
</dbReference>
<gene>
    <name type="primary">KCNA2</name>
</gene>
<name>KCNA2_RABIT</name>
<comment type="function">
    <text evidence="2 3 9 10 11">Voltage-gated potassium channel that mediates transmembrane potassium transport in excitable membranes, primarily in the brain and the central nervous system, but also in the cardiovascular system. Prevents aberrant action potential firing and regulates neuronal output. Forms tetrameric potassium-selective channels through which potassium ions pass in accordance with their electrochemical gradient. The channel alternates between opened and closed conformations in response to the voltage difference across the membrane (PubMed:11717161). Can form functional homotetrameric channels and heterotetrameric channels that contain variable proportions of KCNA1, KCNA2, KCNA4, KCNA5, KCNA6, KCNA7, and possibly other family members as well; channel properties depend on the type of alpha subunits that are part of the channel (PubMed:11717161). Channel properties are modulated by cytoplasmic beta subunits that regulate the subcellular location of the alpha subunits and promote rapid inactivation of delayed rectifier potassium channels (By similarity). In vivo, membranes probably contain a mixture of heteromeric potassium channel complexes, making it difficult to assign currents observed in intact tissues to any particular potassium channel family member. Homotetrameric KCNA2 forms a delayed-rectifier potassium channel that opens in response to membrane depolarization, followed by slow spontaneous channel closure (PubMed:11717161, PubMed:19389710). In contrast, a heteromultimer formed by KCNA2 and KCNA4 shows rapid inactivation (By similarity). Regulates neuronal excitability and plays a role as pacemaker in the regulation of neuronal action potentials (By similarity). KCNA2-containing channels play a presynaptic role and prevent hyperexcitability and aberrant action potential firing (By similarity). Response to toxins that are selective for KCNA2-containing potassium channels suggests that in Purkinje cells, dendritic subthreshold KCNA2-containing potassium channels prevent random spontaneous calcium spikes, suppressing dendritic hyperexcitability without hindering the generation of somatic action potentials, and thereby play an important role in motor coordination (By similarity). Plays a role in the induction of long-term potentiation of neuron excitability in the CA3 layer of the hippocampus (By similarity). May function as down-stream effector for G protein-coupled receptors and inhibit GABAergic inputs to basolateral amygdala neurons (By similarity). May contribute to the regulation of neurotransmitter release, such as gamma-aminobutyric acid (GABA) (By similarity). Contributes to the regulation of the axonal release of the neurotransmitter dopamine (By similarity). Reduced KCNA2 expression plays a role in the perception of neuropathic pain after peripheral nerve injury, but not acute pain (By similarity). Plays a role in the regulation of the time spent in non-rapid eye movement (NREM) sleep (By similarity).</text>
</comment>
<comment type="catalytic activity">
    <reaction evidence="9 10">
        <text>K(+)(in) = K(+)(out)</text>
        <dbReference type="Rhea" id="RHEA:29463"/>
        <dbReference type="ChEBI" id="CHEBI:29103"/>
    </reaction>
</comment>
<comment type="activity regulation">
    <text evidence="1 3 9">Inhibited by 4-aminopyridine (4-AP) (PubMed:11717161). Inhibited by dendrotoxin (DTX) and charybdotoxin (CTX), but not by tetraethylammonium (TEA) (By similarity). Inhibited by tityustoxin-K alpha (TsTX-Kalpha), a toxin that is highly specific for KCNA2 (By similarity). Inhibited by maurotoxin (By similarity). Inhibited by kappaM conotoxins kappaM-RIIIJ and kappaM-RIIIK (By similarity).</text>
</comment>
<comment type="subunit">
    <text evidence="1 2 3 7 8 9 11">Homotetramer and heterotetramer with other channel-forming alpha subunits, such as KCNA1, KCNA4, KCNA5, KCNA6 and KCNA7. Channel activity is regulated by interaction with the beta subunits, including KCNAB1 and KCNAB2. Identified in a complex with KCNA1 and KCNAB2 (By similarity). Identified in a complex with KCNA4 and FYN (PubMed:11149959). Identified in a complex with KCNA5 and KCNAB1 (PubMed:11717160). Interacts with the beta subunit KCNAB1 (PubMed:11717160). Interacts with PTK2B (By similarity). Interacts (via C-terminus) with CTTN (By similarity). Interacts (via N-terminal cytoplasmic domain) with RHOA (GTP-bound form); this regulates channel activity by reducing location at the cell surface in response to CHRM1 activation (By similarity). Interacts with DRD2 (By similarity). Interacts with SIGMAR1; cocaine consumption leads to increased interaction (By similarity). Interacts with ADAM22 (By similarity). Interacts with CNTNAP2 (By similarity). Interacts (via C-terminus) with the PDZ domains of DLG1, DLG2 and DLG4 (By similarity). Interacts with ADAM11 (By similarity). Interacts with LYNX1 (By similarity).</text>
</comment>
<comment type="subcellular location">
    <subcellularLocation>
        <location evidence="9 10">Cell membrane</location>
        <topology evidence="3 11">Multi-pass membrane protein</topology>
    </subcellularLocation>
    <subcellularLocation>
        <location evidence="7">Membrane</location>
    </subcellularLocation>
    <subcellularLocation>
        <location evidence="3">Cell projection</location>
        <location evidence="3">Axon</location>
    </subcellularLocation>
    <subcellularLocation>
        <location evidence="7">Synapse</location>
    </subcellularLocation>
    <subcellularLocation>
        <location evidence="2">Presynaptic cell membrane</location>
    </subcellularLocation>
    <subcellularLocation>
        <location evidence="2">Synapse</location>
        <location evidence="2">Synaptosome</location>
    </subcellularLocation>
    <subcellularLocation>
        <location evidence="3">Endoplasmic reticulum membrane</location>
    </subcellularLocation>
    <subcellularLocation>
        <location evidence="2">Cell projection</location>
        <location evidence="2">Dendrite</location>
    </subcellularLocation>
    <subcellularLocation>
        <location evidence="3">Cell projection</location>
        <location evidence="3">Lamellipodium membrane</location>
    </subcellularLocation>
    <subcellularLocation>
        <location evidence="2">Cell junction</location>
        <location evidence="2">Paranodal septate junction</location>
    </subcellularLocation>
    <text evidence="2 3">KCNA2 by itself is detected both at the endoplasmic reticulum and at the cell membrane. Coexpression with KCNA4 or with beta subunits promotes expression at the cell membrane. Coexpression with KCNA1 inhibits cell surface expression. In myelinated peripheral axons, clustered in the juxtaparadonal region and at an internodal line located along the mesaxon and below the Schmidt-Lanterman incisures (By similarity).</text>
</comment>
<comment type="tissue specificity">
    <text evidence="8">Detected in portal vein myocytes (at protein level) (PubMed:11717160). Detected in portal vein (PubMed:11717160). Brain, liver and kidney.</text>
</comment>
<comment type="domain">
    <text evidence="3">The cytoplasmic N-terminus is important for tetramerization. Interactions between the different subunits modulate the gating characteristics (By similarity). Besides, the cytoplasmic N-terminal domain mediates interaction with RHOA and thus is required for RHOA-mediated endocytosis (By similarity).</text>
</comment>
<comment type="domain">
    <text evidence="3">The transmembrane segment S4 functions as a voltage-sensor and is characterized by a series of positively charged amino acids at every third position. Channel opening and closing is effected by a conformation change that affects the position and orientation of the voltage-sensor paddle formed by S3 and S4 within the membrane. A transmembrane electric field that is positive inside would push the positively charged S4 segment outwards, thereby opening the pore, while a field that is negative inside would pull the S4 segment inwards and close the pore. Changes in the position and orientation of S4 are then transmitted to the activation gate formed by the inner helix bundle via the S4-S5 linker region.</text>
</comment>
<comment type="PTM">
    <text evidence="3">Phosphorylated on tyrosine residues; phosphorylation increases in response to ischemia (By similarity). Phosphorylated on tyrosine residues by activated PTK2B/PYK2 (By similarity). Phosphorylation on tyrosine residues suppresses ion channel activity (By similarity). Phosphorylated on tyrosine residues in response to CHRM1 activation; this abolishes interaction with CTTN. This is probably due to endocytosis of the phosphorylated channel subunits (By similarity). Phosphorylated on serine residues in response to increased cAMP levels; phosphorylation is apparently not catalyzed by PKA (By similarity).</text>
</comment>
<comment type="PTM">
    <text evidence="3">N-glycosylated, with complex, sialylated N-glycans.</text>
</comment>
<comment type="miscellaneous">
    <text evidence="12">The delay or D-type current observed in hippocampus pyramidal neurons is probably mediated by potassium channels containing KCNA2 plus KCNA1 or other family members. It is activated at about -50 mV, i.e. below the action potential threshold, and is characterized by slow inactivation, extremely slow recovery from inactivation, sensitivity to dendrotoxin (DTX) and to 4-aminopyridine (4-AP).</text>
</comment>
<comment type="similarity">
    <text evidence="11">Belongs to the potassium channel family. A (Shaker) (TC 1.A.1.2) subfamily. Kv1.2/KCNA2 sub-subfamily.</text>
</comment>
<protein>
    <recommendedName>
        <fullName>Potassium voltage-gated channel subfamily A member 2</fullName>
    </recommendedName>
    <alternativeName>
        <fullName>KC22</fullName>
    </alternativeName>
    <alternativeName>
        <fullName>Voltage-gated potassium channel subunit Kv1.2</fullName>
    </alternativeName>
</protein>
<keyword id="KW-0965">Cell junction</keyword>
<keyword id="KW-1003">Cell membrane</keyword>
<keyword id="KW-0966">Cell projection</keyword>
<keyword id="KW-0256">Endoplasmic reticulum</keyword>
<keyword id="KW-0325">Glycoprotein</keyword>
<keyword id="KW-0407">Ion channel</keyword>
<keyword id="KW-0406">Ion transport</keyword>
<keyword id="KW-0449">Lipoprotein</keyword>
<keyword id="KW-0472">Membrane</keyword>
<keyword id="KW-0564">Palmitate</keyword>
<keyword id="KW-0597">Phosphoprotein</keyword>
<keyword id="KW-0630">Potassium</keyword>
<keyword id="KW-0631">Potassium channel</keyword>
<keyword id="KW-0633">Potassium transport</keyword>
<keyword id="KW-1185">Reference proteome</keyword>
<keyword id="KW-0770">Synapse</keyword>
<keyword id="KW-0771">Synaptosome</keyword>
<keyword id="KW-0812">Transmembrane</keyword>
<keyword id="KW-1133">Transmembrane helix</keyword>
<keyword id="KW-0813">Transport</keyword>
<keyword id="KW-0851">Voltage-gated channel</keyword>
<accession>Q09081</accession>
<accession>G1SW45</accession>
<accession>Q9MYX3</accession>
<accession>Q9TUK7</accession>
<evidence type="ECO:0000250" key="1">
    <source>
        <dbReference type="UniProtKB" id="P16389"/>
    </source>
</evidence>
<evidence type="ECO:0000250" key="2">
    <source>
        <dbReference type="UniProtKB" id="P63141"/>
    </source>
</evidence>
<evidence type="ECO:0000250" key="3">
    <source>
        <dbReference type="UniProtKB" id="P63142"/>
    </source>
</evidence>
<evidence type="ECO:0000255" key="4"/>
<evidence type="ECO:0000255" key="5">
    <source>
        <dbReference type="PROSITE-ProRule" id="PRU00498"/>
    </source>
</evidence>
<evidence type="ECO:0000256" key="6">
    <source>
        <dbReference type="SAM" id="MobiDB-lite"/>
    </source>
</evidence>
<evidence type="ECO:0000269" key="7">
    <source>
    </source>
</evidence>
<evidence type="ECO:0000269" key="8">
    <source>
    </source>
</evidence>
<evidence type="ECO:0000269" key="9">
    <source>
    </source>
</evidence>
<evidence type="ECO:0000269" key="10">
    <source>
    </source>
</evidence>
<evidence type="ECO:0000305" key="11"/>
<evidence type="ECO:0000305" key="12">
    <source>
    </source>
</evidence>
<organism>
    <name type="scientific">Oryctolagus cuniculus</name>
    <name type="common">Rabbit</name>
    <dbReference type="NCBI Taxonomy" id="9986"/>
    <lineage>
        <taxon>Eukaryota</taxon>
        <taxon>Metazoa</taxon>
        <taxon>Chordata</taxon>
        <taxon>Craniata</taxon>
        <taxon>Vertebrata</taxon>
        <taxon>Euteleostomi</taxon>
        <taxon>Mammalia</taxon>
        <taxon>Eutheria</taxon>
        <taxon>Euarchontoglires</taxon>
        <taxon>Glires</taxon>
        <taxon>Lagomorpha</taxon>
        <taxon>Leporidae</taxon>
        <taxon>Oryctolagus</taxon>
    </lineage>
</organism>
<feature type="chain" id="PRO_0000053974" description="Potassium voltage-gated channel subfamily A member 2">
    <location>
        <begin position="1"/>
        <end position="499"/>
    </location>
</feature>
<feature type="topological domain" description="Cytoplasmic" evidence="3">
    <location>
        <begin position="1"/>
        <end position="160"/>
    </location>
</feature>
<feature type="transmembrane region" description="Helical; Name=Segment S1" evidence="3">
    <location>
        <begin position="161"/>
        <end position="182"/>
    </location>
</feature>
<feature type="topological domain" description="Extracellular" evidence="3">
    <location>
        <begin position="183"/>
        <end position="221"/>
    </location>
</feature>
<feature type="transmembrane region" description="Helical; Name=Segment S2" evidence="3">
    <location>
        <begin position="222"/>
        <end position="243"/>
    </location>
</feature>
<feature type="topological domain" description="Cytoplasmic" evidence="3">
    <location>
        <begin position="244"/>
        <end position="254"/>
    </location>
</feature>
<feature type="transmembrane region" description="Helical; Name=Segment S3" evidence="3">
    <location>
        <begin position="255"/>
        <end position="275"/>
    </location>
</feature>
<feature type="topological domain" description="Extracellular" evidence="3">
    <location>
        <begin position="276"/>
        <end position="289"/>
    </location>
</feature>
<feature type="transmembrane region" description="Helical; Voltage-sensor; Name=Segment S4" evidence="3">
    <location>
        <begin position="290"/>
        <end position="310"/>
    </location>
</feature>
<feature type="topological domain" description="Cytoplasmic" evidence="3">
    <location>
        <begin position="311"/>
        <end position="325"/>
    </location>
</feature>
<feature type="transmembrane region" description="Helical; Name=Segment S5" evidence="3">
    <location>
        <begin position="326"/>
        <end position="347"/>
    </location>
</feature>
<feature type="topological domain" description="Extracellular" evidence="3">
    <location>
        <begin position="348"/>
        <end position="361"/>
    </location>
</feature>
<feature type="intramembrane region" description="Helical; Name=Pore helix" evidence="3">
    <location>
        <begin position="362"/>
        <end position="373"/>
    </location>
</feature>
<feature type="intramembrane region" evidence="3">
    <location>
        <begin position="374"/>
        <end position="381"/>
    </location>
</feature>
<feature type="topological domain" description="Extracellular" evidence="3">
    <location>
        <begin position="382"/>
        <end position="388"/>
    </location>
</feature>
<feature type="transmembrane region" description="Helical; Name=Segment S6" evidence="3">
    <location>
        <begin position="389"/>
        <end position="417"/>
    </location>
</feature>
<feature type="topological domain" description="Cytoplasmic" evidence="3">
    <location>
        <begin position="418"/>
        <end position="499"/>
    </location>
</feature>
<feature type="region of interest" description="Tetramerization domain" evidence="3">
    <location>
        <begin position="1"/>
        <end position="125"/>
    </location>
</feature>
<feature type="region of interest" description="Disordered" evidence="6">
    <location>
        <begin position="1"/>
        <end position="26"/>
    </location>
</feature>
<feature type="region of interest" description="S4-S5 linker" evidence="3">
    <location>
        <begin position="312"/>
        <end position="325"/>
    </location>
</feature>
<feature type="short sequence motif" description="Selectivity filter" evidence="3">
    <location>
        <begin position="374"/>
        <end position="379"/>
    </location>
</feature>
<feature type="short sequence motif" description="PDZ-binding" evidence="3">
    <location>
        <begin position="497"/>
        <end position="499"/>
    </location>
</feature>
<feature type="site" description="Important for normal, slow channel gating" evidence="3">
    <location>
        <position position="252"/>
    </location>
</feature>
<feature type="site" description="Important for binding with the scorpion mesomartoxin; when the scorpion mesomartoxin-rKv1.2/KCNA2 interaction is modeled, this residue is close to the 'Y-57' residue of the toxin" evidence="3">
    <location>
        <position position="381"/>
    </location>
</feature>
<feature type="modified residue" description="Phosphotyrosine" evidence="2">
    <location>
        <position position="429"/>
    </location>
</feature>
<feature type="modified residue" description="Phosphoserine" evidence="2">
    <location>
        <position position="434"/>
    </location>
</feature>
<feature type="modified residue" description="Phosphoserine" evidence="10">
    <location>
        <position position="440"/>
    </location>
</feature>
<feature type="modified residue" description="Phosphoserine" evidence="10">
    <location>
        <position position="441"/>
    </location>
</feature>
<feature type="modified residue" description="Phosphoserine" evidence="10">
    <location>
        <position position="449"/>
    </location>
</feature>
<feature type="modified residue" description="Phosphotyrosine" evidence="3">
    <location>
        <position position="458"/>
    </location>
</feature>
<feature type="modified residue" description="Phosphoserine" evidence="2">
    <location>
        <position position="468"/>
    </location>
</feature>
<feature type="lipid moiety-binding region" description="S-palmitoyl cysteine" evidence="4">
    <location>
        <position position="244"/>
    </location>
</feature>
<feature type="glycosylation site" description="N-linked (GlcNAc...) asparagine" evidence="5">
    <location>
        <position position="207"/>
    </location>
</feature>
<feature type="sequence conflict" description="In Ref. 1; AAF91476." evidence="11" ref="1">
    <original>E</original>
    <variation>G</variation>
    <location>
        <position position="6"/>
    </location>
</feature>
<feature type="sequence conflict" description="In Ref. 3; AAD43820." evidence="11" ref="3">
    <original>Q</original>
    <variation>L</variation>
    <location>
        <position position="93"/>
    </location>
</feature>
<feature type="sequence conflict" description="In Ref. 3; AAD43820." evidence="11" ref="3">
    <original>RR</original>
    <variation>P</variation>
    <location>
        <begin position="99"/>
        <end position="100"/>
    </location>
</feature>
<feature type="sequence conflict" description="In Ref. 3; AAD43820." evidence="11" ref="3">
    <original>F</original>
    <variation>S</variation>
    <location>
        <position position="153"/>
    </location>
</feature>
<feature type="sequence conflict" description="In Ref. 3; AAD43820." evidence="11" ref="3">
    <original>I</original>
    <variation>M</variation>
    <location>
        <position position="175"/>
    </location>
</feature>
<feature type="sequence conflict" description="In Ref. 3; AAD43820." evidence="11" ref="3">
    <original>I</original>
    <variation>T</variation>
    <location>
        <position position="260"/>
    </location>
</feature>
<proteinExistence type="evidence at protein level"/>
<reference key="1">
    <citation type="journal article" date="2001" name="Circ. Res.">
        <title>Molecular composition of 4-aminopyridine-sensitive voltage-gated K(+) channels of vascular smooth muscle.</title>
        <authorList>
            <person name="Thorneloe K.S."/>
            <person name="Chen T.T."/>
            <person name="Kerr P.M."/>
            <person name="Grier E.F."/>
            <person name="Horowitz B."/>
            <person name="Cole W.C."/>
            <person name="Walsh M.P."/>
        </authorList>
    </citation>
    <scope>NUCLEOTIDE SEQUENCE [MRNA]</scope>
    <scope>SUBUNIT</scope>
    <scope>INTERACTION WITH KCNA5 AND KCNAB1</scope>
    <scope>TISSUE SPECIFICITY</scope>
</reference>
<reference key="2">
    <citation type="submission" date="2009-08" db="EMBL/GenBank/DDBJ databases">
        <title>Genome Sequence of Oryctolagus cuniculus (European rabbit).</title>
        <authorList>
            <consortium name="The Genome Sequencing Platform"/>
            <person name="Di Palma F."/>
            <person name="Heiman D."/>
            <person name="Young S."/>
            <person name="Gnerre S."/>
            <person name="Johnson J."/>
            <person name="Lander E.S."/>
            <person name="Lindblad-Toh K."/>
        </authorList>
    </citation>
    <scope>NUCLEOTIDE SEQUENCE [LARGE SCALE GENOMIC DNA]</scope>
    <source>
        <strain>Thorbecke</strain>
    </source>
</reference>
<reference key="3">
    <citation type="journal article" date="1992" name="Am. J. Physiol.">
        <title>Isolation of putative voltage-gated epithelial K-channel isoforms from rabbit kidney and LLC-PK1 cells.</title>
        <authorList>
            <person name="Desir G.V."/>
            <person name="Hamlin H.A."/>
            <person name="Puente E."/>
            <person name="Reilly R.F."/>
            <person name="Hildebrandt F."/>
            <person name="Igarashi P."/>
        </authorList>
    </citation>
    <scope>NUCLEOTIDE SEQUENCE [MRNA] OF 81-360</scope>
    <source>
        <strain>New Zealand white</strain>
        <tissue>Kidney</tissue>
    </source>
</reference>
<reference key="4">
    <citation type="journal article" date="2001" name="Circ. Res.">
        <title>Heteromultimeric Kv1.2-Kv1.5 channels underlie 4-aminopyridine-sensitive delayed rectifier K(+) current of rabbit vascular myocytes.</title>
        <authorList>
            <person name="Kerr P.M."/>
            <person name="Clement-Chomienne O."/>
            <person name="Thorneloe K.S."/>
            <person name="Chen T.T."/>
            <person name="Ishii K."/>
            <person name="Sontag D.P."/>
            <person name="Walsh M.P."/>
            <person name="Cole W.C."/>
        </authorList>
    </citation>
    <scope>FUNCTION</scope>
    <scope>SUBUNIT</scope>
    <scope>SUBCELLULAR LOCATION</scope>
    <scope>ACTIVITY REGULATION</scope>
    <scope>TRANSPORTER ACTIVITY</scope>
</reference>
<reference key="5">
    <citation type="journal article" date="2001" name="Proc. Natl. Acad. Sci. U.S.A.">
        <title>A mechanism for combinatorial regulation of electrical activity: Potassium channel subunits capable of functioning as Src homology 3-dependent adaptors.</title>
        <authorList>
            <person name="Nitabach M.N."/>
            <person name="Llamas D.A."/>
            <person name="Araneda R.C."/>
            <person name="Intile J.L."/>
            <person name="Thompson I.J."/>
            <person name="Zhou Y.I."/>
            <person name="Holmes T.C."/>
        </authorList>
    </citation>
    <scope>IDENTIFICATION IN A COMPLEX WITH KCNA4 AND FYN</scope>
    <scope>INTERACTION WITH KCNA4 AND KCNA5</scope>
    <scope>SUBCELLULAR LOCATION</scope>
</reference>
<reference key="6">
    <citation type="journal article" date="2007" name="Mol. Neurobiol.">
        <title>Ionic channel function in action potential generation: current perspective.</title>
        <authorList>
            <person name="Baranauskas G."/>
        </authorList>
    </citation>
    <scope>REVIEW</scope>
</reference>
<reference key="7">
    <citation type="journal article" date="2009" name="J. Biol. Chem.">
        <title>Identification and functional characterization of protein kinase A-catalyzed phosphorylation of potassium channel Kv1.2 at serine 449.</title>
        <authorList>
            <person name="Johnson R.P."/>
            <person name="El-Yazbi A.F."/>
            <person name="Hughes M.F."/>
            <person name="Schriemer D.C."/>
            <person name="Walsh E.J."/>
            <person name="Walsh M.P."/>
            <person name="Cole W.C."/>
        </authorList>
    </citation>
    <scope>FUNCTION</scope>
    <scope>SUBCELLULAR LOCATION</scope>
    <scope>PHOSPHORYLATION AT SER-440; SER-441 AND SER-449</scope>
    <scope>IDENTIFICATION BY MASS SPECTROMETRY</scope>
    <scope>TRANSPORTER ACTIVITY</scope>
</reference>
<sequence>MTVATEDPADEAAALPGHPQDTYDPEADHECCERVVINISGLRFETQLKTLAQFPETLLGDPKKRMRYFDPLRNEYFFDRNRPSFDAILYYYQSGGRLRRPVNVPLDIFSEEIRFYELGEEAMEMFREDEGYIKEEERPLPENEFQRQVWLLFEYPESSGPARIIAIVSVMVILISIVSFCLETLPIFRDENEDMHGSGMTFHTYSNSTAGYQQSTSFTDPFFIVETLCIIWFSFEFLVRFFACPSKAGFFTNIMNIIDIVAIIPYFITLGTELAEKPEDAQQGQQAMSLAILRVIRLVRVFRIFKLSRHSKGLQILGQTLKASMRELGLLIFFLFIGVILFSSAVYFAEADERDSQFPSIPDAFWWAVVSMTTVGYGDMVPTTIGGKIVGSLCAIAGVLTIALPVPVIVSNFNYFYHRETEGEEQAQYLQVTSCPKIPSSPDLKKSRSASTISKSDYMEIQEGVNNSNEDFREENLKTANCTLANTNYVNITKMLTDV</sequence>